<protein>
    <recommendedName>
        <fullName>Carminomycin 4-O-methyltransferase DauK</fullName>
        <shortName>COMT</shortName>
        <ecNumber>2.1.1.292</ecNumber>
    </recommendedName>
    <alternativeName>
        <fullName>Anthracycline 4-O-methyltransferase</fullName>
    </alternativeName>
</protein>
<keyword id="KW-0045">Antibiotic biosynthesis</keyword>
<keyword id="KW-0489">Methyltransferase</keyword>
<keyword id="KW-0949">S-adenosyl-L-methionine</keyword>
<keyword id="KW-0808">Transferase</keyword>
<feature type="chain" id="PRO_0000425682" description="Carminomycin 4-O-methyltransferase DauK">
    <location>
        <begin position="1"/>
        <end position="356"/>
    </location>
</feature>
<feature type="binding site" evidence="1">
    <location>
        <position position="153"/>
    </location>
    <ligand>
        <name>S-adenosyl-L-methionine</name>
        <dbReference type="ChEBI" id="CHEBI:59789"/>
    </ligand>
</feature>
<feature type="binding site" evidence="1">
    <location>
        <position position="163"/>
    </location>
    <ligand>
        <name>substrate</name>
    </ligand>
</feature>
<feature type="binding site" evidence="1">
    <location>
        <position position="187"/>
    </location>
    <ligand>
        <name>S-adenosyl-L-methionine</name>
        <dbReference type="ChEBI" id="CHEBI:59789"/>
    </ligand>
</feature>
<feature type="binding site" evidence="1">
    <location>
        <position position="210"/>
    </location>
    <ligand>
        <name>S-adenosyl-L-methionine</name>
        <dbReference type="ChEBI" id="CHEBI:59789"/>
    </ligand>
</feature>
<feature type="binding site" evidence="1">
    <location>
        <begin position="237"/>
        <end position="238"/>
    </location>
    <ligand>
        <name>S-adenosyl-L-methionine</name>
        <dbReference type="ChEBI" id="CHEBI:59789"/>
    </ligand>
</feature>
<feature type="binding site" evidence="1">
    <location>
        <position position="252"/>
    </location>
    <ligand>
        <name>S-adenosyl-L-methionine</name>
        <dbReference type="ChEBI" id="CHEBI:59789"/>
    </ligand>
</feature>
<feature type="binding site" evidence="1">
    <location>
        <position position="257"/>
    </location>
    <ligand>
        <name>substrate</name>
    </ligand>
</feature>
<feature type="binding site" evidence="1">
    <location>
        <position position="303"/>
    </location>
    <ligand>
        <name>substrate</name>
    </ligand>
</feature>
<comment type="function">
    <text evidence="2 3 4">Involved in the biosynthesis of the anthracyclines carminomycin and daunorubicin (daunomycin) which are aromatic polyketide antibiotics that exhibit high cytotoxicity and are widely applied in the chemotherapy of a variety of cancers. In vivo, catalyzes the transfer of a methyl group from S-adenosyl-L-methionine to the 4-O-position of carminomycin to form daunorubicin. In vitro, it also methylates the anthracyclines rhodomycin D (10-carbomethoxy-13-deoxycarminomycin), 10-carboxy-13-deoxycarminomycin, 13-deoxy-carminomycin and 13-dihydrocarminomycin at the 4-hydroxyl position.</text>
</comment>
<comment type="catalytic activity">
    <reaction evidence="3 4">
        <text>carminomycin + S-adenosyl-L-methionine = daunorubicin + S-adenosyl-L-homocysteine + H(+)</text>
        <dbReference type="Rhea" id="RHEA:38311"/>
        <dbReference type="ChEBI" id="CHEBI:15378"/>
        <dbReference type="ChEBI" id="CHEBI:57856"/>
        <dbReference type="ChEBI" id="CHEBI:59789"/>
        <dbReference type="ChEBI" id="CHEBI:64677"/>
        <dbReference type="ChEBI" id="CHEBI:75730"/>
        <dbReference type="EC" id="2.1.1.292"/>
    </reaction>
</comment>
<comment type="activity regulation">
    <text evidence="3">Strongly inhibited by S-adenosyl-L-homocysteine and weakly by adenine and methionine.</text>
</comment>
<comment type="biophysicochemical properties">
    <kinetics>
        <KM evidence="3">0.5 uM for carminomycin</KM>
        <KM evidence="3">1 uM for 13-dihydrocarminomycin</KM>
        <KM evidence="3">25 uM for S-adenosyl-L-methionine</KM>
    </kinetics>
    <phDependence>
        <text evidence="3">Optimum pH is 8 and the values at pH 7.5 and 7.0 result in 60% and 80% decreases in activity, respectively. No pH values above pH 8.0.</text>
    </phDependence>
    <temperatureDependence>
        <text evidence="3">Optimum temperature is 37 degrees Celsius with about 10% decrease in activity at 30 and 45 degrees Celsius.</text>
    </temperatureDependence>
</comment>
<comment type="pathway">
    <text>Antibiotic biosynthesis; daunorubicin biosynthesis.</text>
</comment>
<comment type="pathway">
    <text>Antibiotic biosynthesis; carminomycin biosynthesis.</text>
</comment>
<comment type="subunit">
    <text evidence="6">Homodimer and homotetramer in equilibrium.</text>
</comment>
<comment type="similarity">
    <text evidence="5">Belongs to the class I-like SAM-binding methyltransferase superfamily. Cation-independent O-methyltransferase family.</text>
</comment>
<dbReference type="EC" id="2.1.1.292"/>
<dbReference type="EMBL" id="L35154">
    <property type="protein sequence ID" value="AAB16938.1"/>
    <property type="molecule type" value="Genomic_DNA"/>
</dbReference>
<dbReference type="SMR" id="Q55216"/>
<dbReference type="KEGG" id="ag:AAB16938"/>
<dbReference type="BRENDA" id="2.1.1.292">
    <property type="organism ID" value="1284"/>
</dbReference>
<dbReference type="UniPathway" id="UPA00054"/>
<dbReference type="UniPathway" id="UPA01040"/>
<dbReference type="GO" id="GO:0008168">
    <property type="term" value="F:methyltransferase activity"/>
    <property type="evidence" value="ECO:0000314"/>
    <property type="project" value="UniProtKB"/>
</dbReference>
<dbReference type="GO" id="GO:0008171">
    <property type="term" value="F:O-methyltransferase activity"/>
    <property type="evidence" value="ECO:0007669"/>
    <property type="project" value="InterPro"/>
</dbReference>
<dbReference type="GO" id="GO:0046983">
    <property type="term" value="F:protein dimerization activity"/>
    <property type="evidence" value="ECO:0007669"/>
    <property type="project" value="InterPro"/>
</dbReference>
<dbReference type="GO" id="GO:1901771">
    <property type="term" value="P:daunorubicin biosynthetic process"/>
    <property type="evidence" value="ECO:0000315"/>
    <property type="project" value="UniProtKB"/>
</dbReference>
<dbReference type="GO" id="GO:0032259">
    <property type="term" value="P:methylation"/>
    <property type="evidence" value="ECO:0007669"/>
    <property type="project" value="UniProtKB-KW"/>
</dbReference>
<dbReference type="CDD" id="cd02440">
    <property type="entry name" value="AdoMet_MTases"/>
    <property type="match status" value="1"/>
</dbReference>
<dbReference type="FunFam" id="1.10.10.10:FF:001051">
    <property type="entry name" value="Carminomycin 4-O-methyltransferase DnrK"/>
    <property type="match status" value="1"/>
</dbReference>
<dbReference type="FunFam" id="3.40.50.150:FF:000405">
    <property type="entry name" value="Carminomycin 4-O-methyltransferase DnrK"/>
    <property type="match status" value="1"/>
</dbReference>
<dbReference type="Gene3D" id="1.10.287.1350">
    <property type="match status" value="1"/>
</dbReference>
<dbReference type="Gene3D" id="3.40.50.150">
    <property type="entry name" value="Vaccinia Virus protein VP39"/>
    <property type="match status" value="1"/>
</dbReference>
<dbReference type="Gene3D" id="1.10.10.10">
    <property type="entry name" value="Winged helix-like DNA-binding domain superfamily/Winged helix DNA-binding domain"/>
    <property type="match status" value="1"/>
</dbReference>
<dbReference type="InterPro" id="IPR016461">
    <property type="entry name" value="COMT-like"/>
</dbReference>
<dbReference type="InterPro" id="IPR001077">
    <property type="entry name" value="O_MeTrfase_dom"/>
</dbReference>
<dbReference type="InterPro" id="IPR012967">
    <property type="entry name" value="Plant_O-MeTrfase_dimerisation"/>
</dbReference>
<dbReference type="InterPro" id="IPR029063">
    <property type="entry name" value="SAM-dependent_MTases_sf"/>
</dbReference>
<dbReference type="InterPro" id="IPR036388">
    <property type="entry name" value="WH-like_DNA-bd_sf"/>
</dbReference>
<dbReference type="InterPro" id="IPR036390">
    <property type="entry name" value="WH_DNA-bd_sf"/>
</dbReference>
<dbReference type="PANTHER" id="PTHR43712:SF2">
    <property type="entry name" value="O-METHYLTRANSFERASE CICE"/>
    <property type="match status" value="1"/>
</dbReference>
<dbReference type="PANTHER" id="PTHR43712">
    <property type="entry name" value="PUTATIVE (AFU_ORTHOLOGUE AFUA_4G14580)-RELATED"/>
    <property type="match status" value="1"/>
</dbReference>
<dbReference type="Pfam" id="PF08100">
    <property type="entry name" value="Dimerisation"/>
    <property type="match status" value="1"/>
</dbReference>
<dbReference type="Pfam" id="PF00891">
    <property type="entry name" value="Methyltransf_2"/>
    <property type="match status" value="1"/>
</dbReference>
<dbReference type="PIRSF" id="PIRSF005739">
    <property type="entry name" value="O-mtase"/>
    <property type="match status" value="1"/>
</dbReference>
<dbReference type="SUPFAM" id="SSF53335">
    <property type="entry name" value="S-adenosyl-L-methionine-dependent methyltransferases"/>
    <property type="match status" value="1"/>
</dbReference>
<dbReference type="SUPFAM" id="SSF46785">
    <property type="entry name" value="Winged helix' DNA-binding domain"/>
    <property type="match status" value="1"/>
</dbReference>
<dbReference type="PROSITE" id="PS51683">
    <property type="entry name" value="SAM_OMT_II"/>
    <property type="match status" value="1"/>
</dbReference>
<sequence>MTAEPTVAARPQQIDALRTLIRLGSLHTPMVVRTAATLRLVDHILAGARTVKALAARTDTRPEALLRLIRHLVAIGLLEEDAPGEFAPTEVGKLLADDHPAAQRAWHDLTQAVARADISFTRLPEAIRSGRPTYESVYGKPFYEDLAGRPDLRASFDSLLACDQDVAFDAPAAAHDWTNVRHVLDVGGGKGGFAAAIARRAPHVSATVLEMAGTVDTARSYLRDAGLSDRVDVVEGDFFEPLPRRADAIILSFVLLNWPDHDAVRILTRCAEALEPGGRILIHERDDLHENSFNEQFTELDLRMLVFLGGALRTREKWDGLAASAGLVVEEVRQLPSPTIPYDLSLLVLAPASTGA</sequence>
<organism>
    <name type="scientific">Streptomyces sp. (strain C5)</name>
    <dbReference type="NCBI Taxonomy" id="45212"/>
    <lineage>
        <taxon>Bacteria</taxon>
        <taxon>Bacillati</taxon>
        <taxon>Actinomycetota</taxon>
        <taxon>Actinomycetes</taxon>
        <taxon>Kitasatosporales</taxon>
        <taxon>Streptomycetaceae</taxon>
        <taxon>Streptomyces</taxon>
    </lineage>
</organism>
<accession>Q55216</accession>
<reference key="1">
    <citation type="journal article" date="1995" name="J. Bacteriol.">
        <title>Analysis of clustered genes encoding both early and late steps in daunomycin biosynthesis by Streptomyces sp. strain C5.</title>
        <authorList>
            <person name="Dickens M.L."/>
            <person name="Ye J."/>
            <person name="Strohl W.R."/>
        </authorList>
    </citation>
    <scope>NUCLEOTIDE SEQUENCE [GENOMIC DNA]</scope>
    <scope>FUNCTION</scope>
    <source>
        <strain>C5</strain>
    </source>
</reference>
<reference key="2">
    <citation type="journal article" date="1993" name="J. Gen. Microbiol.">
        <title>Partial purification and properties of carminomycin 4-O-methyltransferase from Streptomyces sp. strain C5.</title>
        <authorList>
            <person name="Connors N.C."/>
            <person name="Strohl W.R."/>
        </authorList>
    </citation>
    <scope>FUNCTION</scope>
    <scope>CATALYTIC ACTIVITY</scope>
    <scope>BIOPHYSICOCHEMICAL PROPERTIES</scope>
    <scope>SUBSTRATE SPECIFICITY</scope>
    <scope>ACTIVITY REGULATION</scope>
    <scope>SUBUNIT</scope>
    <source>
        <strain>C5</strain>
    </source>
</reference>
<reference key="3">
    <citation type="journal article" date="1997" name="J. Bacteriol.">
        <title>In vivo and in vitro bioconversion of epsilon-rhodomycinone glycoside to doxorubicin: functions of DauP, DauK, and DoxA.</title>
        <authorList>
            <person name="Dickens M.L."/>
            <person name="Priestley N.D."/>
            <person name="Strohl W.R."/>
        </authorList>
    </citation>
    <scope>FUNCTION</scope>
    <scope>CATALYTIC ACTIVITY</scope>
    <scope>SUBSTRATE SPECIFICITY</scope>
    <source>
        <strain>C5</strain>
    </source>
</reference>
<name>DNRK_STRS5</name>
<gene>
    <name type="primary">dauK</name>
</gene>
<evidence type="ECO:0000250" key="1"/>
<evidence type="ECO:0000269" key="2">
    <source>
    </source>
</evidence>
<evidence type="ECO:0000269" key="3">
    <source>
    </source>
</evidence>
<evidence type="ECO:0000269" key="4">
    <source>
    </source>
</evidence>
<evidence type="ECO:0000305" key="5"/>
<evidence type="ECO:0000305" key="6">
    <source>
    </source>
</evidence>
<proteinExistence type="evidence at protein level"/>